<evidence type="ECO:0000255" key="1">
    <source>
        <dbReference type="HAMAP-Rule" id="MF_00068"/>
    </source>
</evidence>
<organism>
    <name type="scientific">Nostoc punctiforme (strain ATCC 29133 / PCC 73102)</name>
    <dbReference type="NCBI Taxonomy" id="63737"/>
    <lineage>
        <taxon>Bacteria</taxon>
        <taxon>Bacillati</taxon>
        <taxon>Cyanobacteriota</taxon>
        <taxon>Cyanophyceae</taxon>
        <taxon>Nostocales</taxon>
        <taxon>Nostocaceae</taxon>
        <taxon>Nostoc</taxon>
    </lineage>
</organism>
<dbReference type="EC" id="4.2.1.126" evidence="1"/>
<dbReference type="EMBL" id="CP001037">
    <property type="protein sequence ID" value="ACC84306.1"/>
    <property type="molecule type" value="Genomic_DNA"/>
</dbReference>
<dbReference type="RefSeq" id="WP_012412247.1">
    <property type="nucleotide sequence ID" value="NC_010628.1"/>
</dbReference>
<dbReference type="SMR" id="B2IU18"/>
<dbReference type="STRING" id="63737.Npun_R6016"/>
<dbReference type="EnsemblBacteria" id="ACC84306">
    <property type="protein sequence ID" value="ACC84306"/>
    <property type="gene ID" value="Npun_R6016"/>
</dbReference>
<dbReference type="KEGG" id="npu:Npun_R6016"/>
<dbReference type="eggNOG" id="COG2103">
    <property type="taxonomic scope" value="Bacteria"/>
</dbReference>
<dbReference type="HOGENOM" id="CLU_049049_1_1_3"/>
<dbReference type="OrthoDB" id="9813395at2"/>
<dbReference type="PhylomeDB" id="B2IU18"/>
<dbReference type="UniPathway" id="UPA00342"/>
<dbReference type="Proteomes" id="UP000001191">
    <property type="component" value="Chromosome"/>
</dbReference>
<dbReference type="GO" id="GO:0097367">
    <property type="term" value="F:carbohydrate derivative binding"/>
    <property type="evidence" value="ECO:0007669"/>
    <property type="project" value="InterPro"/>
</dbReference>
<dbReference type="GO" id="GO:0016835">
    <property type="term" value="F:carbon-oxygen lyase activity"/>
    <property type="evidence" value="ECO:0007669"/>
    <property type="project" value="UniProtKB-UniRule"/>
</dbReference>
<dbReference type="GO" id="GO:0016803">
    <property type="term" value="F:ether hydrolase activity"/>
    <property type="evidence" value="ECO:0007669"/>
    <property type="project" value="TreeGrafter"/>
</dbReference>
<dbReference type="GO" id="GO:0046348">
    <property type="term" value="P:amino sugar catabolic process"/>
    <property type="evidence" value="ECO:0007669"/>
    <property type="project" value="InterPro"/>
</dbReference>
<dbReference type="GO" id="GO:0097173">
    <property type="term" value="P:N-acetylmuramic acid catabolic process"/>
    <property type="evidence" value="ECO:0007669"/>
    <property type="project" value="UniProtKB-UniPathway"/>
</dbReference>
<dbReference type="GO" id="GO:0009254">
    <property type="term" value="P:peptidoglycan turnover"/>
    <property type="evidence" value="ECO:0007669"/>
    <property type="project" value="TreeGrafter"/>
</dbReference>
<dbReference type="CDD" id="cd05007">
    <property type="entry name" value="SIS_Etherase"/>
    <property type="match status" value="1"/>
</dbReference>
<dbReference type="FunFam" id="3.40.50.10490:FF:000014">
    <property type="entry name" value="N-acetylmuramic acid 6-phosphate etherase"/>
    <property type="match status" value="1"/>
</dbReference>
<dbReference type="Gene3D" id="1.10.8.1080">
    <property type="match status" value="1"/>
</dbReference>
<dbReference type="Gene3D" id="3.40.50.10490">
    <property type="entry name" value="Glucose-6-phosphate isomerase like protein, domain 1"/>
    <property type="match status" value="1"/>
</dbReference>
<dbReference type="HAMAP" id="MF_00068">
    <property type="entry name" value="MurQ"/>
    <property type="match status" value="1"/>
</dbReference>
<dbReference type="InterPro" id="IPR005488">
    <property type="entry name" value="Etherase_MurQ"/>
</dbReference>
<dbReference type="InterPro" id="IPR005486">
    <property type="entry name" value="Glucokinase_regulatory_CS"/>
</dbReference>
<dbReference type="InterPro" id="IPR040190">
    <property type="entry name" value="MURQ/GCKR"/>
</dbReference>
<dbReference type="InterPro" id="IPR001347">
    <property type="entry name" value="SIS_dom"/>
</dbReference>
<dbReference type="InterPro" id="IPR046348">
    <property type="entry name" value="SIS_dom_sf"/>
</dbReference>
<dbReference type="NCBIfam" id="TIGR00274">
    <property type="entry name" value="N-acetylmuramic acid 6-phosphate etherase"/>
    <property type="match status" value="1"/>
</dbReference>
<dbReference type="NCBIfam" id="NF003915">
    <property type="entry name" value="PRK05441.1"/>
    <property type="match status" value="1"/>
</dbReference>
<dbReference type="NCBIfam" id="NF009222">
    <property type="entry name" value="PRK12570.1"/>
    <property type="match status" value="1"/>
</dbReference>
<dbReference type="PANTHER" id="PTHR10088">
    <property type="entry name" value="GLUCOKINASE REGULATORY PROTEIN"/>
    <property type="match status" value="1"/>
</dbReference>
<dbReference type="PANTHER" id="PTHR10088:SF4">
    <property type="entry name" value="GLUCOKINASE REGULATORY PROTEIN"/>
    <property type="match status" value="1"/>
</dbReference>
<dbReference type="Pfam" id="PF20741">
    <property type="entry name" value="GKRP-like_C"/>
    <property type="match status" value="1"/>
</dbReference>
<dbReference type="Pfam" id="PF22645">
    <property type="entry name" value="GKRP_SIS_N"/>
    <property type="match status" value="1"/>
</dbReference>
<dbReference type="SUPFAM" id="SSF53697">
    <property type="entry name" value="SIS domain"/>
    <property type="match status" value="1"/>
</dbReference>
<dbReference type="PROSITE" id="PS01272">
    <property type="entry name" value="GCKR"/>
    <property type="match status" value="1"/>
</dbReference>
<dbReference type="PROSITE" id="PS51464">
    <property type="entry name" value="SIS"/>
    <property type="match status" value="1"/>
</dbReference>
<feature type="chain" id="PRO_1000092309" description="N-acetylmuramic acid 6-phosphate etherase">
    <location>
        <begin position="1"/>
        <end position="308"/>
    </location>
</feature>
<feature type="domain" description="SIS" evidence="1">
    <location>
        <begin position="59"/>
        <end position="222"/>
    </location>
</feature>
<feature type="active site" description="Proton donor" evidence="1">
    <location>
        <position position="87"/>
    </location>
</feature>
<feature type="active site" evidence="1">
    <location>
        <position position="118"/>
    </location>
</feature>
<sequence>MTNLQERGHLLTELVNPNSLNLDQLSSLELVELFNSEDQKAVAAVAAAKVQLAEAIDSTAERLRHGGRLFYIGAGTSGRLGVLDAAECPPTFCTPPELVQGIIAGGAGALVRSSEDLEDSIEDGEAAIAGRHITQLDVVVGITAGGTTPYVHGAIHAARQRGASTIFIACVPAEQVSIDADIDIRLLTGPEIIAGSTRLKAGTVTKLALNMLSTGVMVKLGKVYGNRMVDVAVTNQKLRDRALRILQDLTGLSREAAGFLLERSGKWVKLALLMHWTGLEKDDGDRLLSEHQSNLRAAVMSYQNHNQS</sequence>
<gene>
    <name evidence="1" type="primary">murQ</name>
    <name type="ordered locus">Npun_R6016</name>
</gene>
<comment type="function">
    <text evidence="1">Specifically catalyzes the cleavage of the D-lactyl ether substituent of MurNAc 6-phosphate, producing GlcNAc 6-phosphate and D-lactate.</text>
</comment>
<comment type="catalytic activity">
    <reaction evidence="1">
        <text>N-acetyl-D-muramate 6-phosphate + H2O = N-acetyl-D-glucosamine 6-phosphate + (R)-lactate</text>
        <dbReference type="Rhea" id="RHEA:26410"/>
        <dbReference type="ChEBI" id="CHEBI:15377"/>
        <dbReference type="ChEBI" id="CHEBI:16004"/>
        <dbReference type="ChEBI" id="CHEBI:57513"/>
        <dbReference type="ChEBI" id="CHEBI:58722"/>
        <dbReference type="EC" id="4.2.1.126"/>
    </reaction>
</comment>
<comment type="pathway">
    <text evidence="1">Amino-sugar metabolism; N-acetylmuramate degradation.</text>
</comment>
<comment type="subunit">
    <text evidence="1">Homodimer.</text>
</comment>
<comment type="miscellaneous">
    <text evidence="1">A lyase-type mechanism (elimination/hydration) is suggested for the cleavage of the lactyl ether bond of MurNAc 6-phosphate, with the formation of an alpha,beta-unsaturated aldehyde intermediate with (E)-stereochemistry, followed by the syn addition of water to give product.</text>
</comment>
<comment type="similarity">
    <text evidence="1">Belongs to the GCKR-like family. MurNAc-6-P etherase subfamily.</text>
</comment>
<name>MURQ_NOSP7</name>
<reference key="1">
    <citation type="journal article" date="2013" name="Plant Physiol.">
        <title>A Nostoc punctiforme Sugar Transporter Necessary to Establish a Cyanobacterium-Plant Symbiosis.</title>
        <authorList>
            <person name="Ekman M."/>
            <person name="Picossi S."/>
            <person name="Campbell E.L."/>
            <person name="Meeks J.C."/>
            <person name="Flores E."/>
        </authorList>
    </citation>
    <scope>NUCLEOTIDE SEQUENCE [LARGE SCALE GENOMIC DNA]</scope>
    <source>
        <strain>ATCC 29133 / PCC 73102</strain>
    </source>
</reference>
<keyword id="KW-0119">Carbohydrate metabolism</keyword>
<keyword id="KW-0456">Lyase</keyword>
<keyword id="KW-1185">Reference proteome</keyword>
<proteinExistence type="inferred from homology"/>
<accession>B2IU18</accession>
<protein>
    <recommendedName>
        <fullName evidence="1">N-acetylmuramic acid 6-phosphate etherase</fullName>
        <shortName evidence="1">MurNAc-6-P etherase</shortName>
        <ecNumber evidence="1">4.2.1.126</ecNumber>
    </recommendedName>
    <alternativeName>
        <fullName evidence="1">N-acetylmuramic acid 6-phosphate hydrolase</fullName>
    </alternativeName>
    <alternativeName>
        <fullName evidence="1">N-acetylmuramic acid 6-phosphate lyase</fullName>
    </alternativeName>
</protein>